<evidence type="ECO:0000255" key="1">
    <source>
        <dbReference type="HAMAP-Rule" id="MF_01320"/>
    </source>
</evidence>
<evidence type="ECO:0000256" key="2">
    <source>
        <dbReference type="SAM" id="MobiDB-lite"/>
    </source>
</evidence>
<evidence type="ECO:0000305" key="3"/>
<proteinExistence type="inferred from homology"/>
<reference key="1">
    <citation type="submission" date="2007-06" db="EMBL/GenBank/DDBJ databases">
        <title>Complete sequence of Clostridium beijerinckii NCIMB 8052.</title>
        <authorList>
            <consortium name="US DOE Joint Genome Institute"/>
            <person name="Copeland A."/>
            <person name="Lucas S."/>
            <person name="Lapidus A."/>
            <person name="Barry K."/>
            <person name="Detter J.C."/>
            <person name="Glavina del Rio T."/>
            <person name="Hammon N."/>
            <person name="Israni S."/>
            <person name="Dalin E."/>
            <person name="Tice H."/>
            <person name="Pitluck S."/>
            <person name="Sims D."/>
            <person name="Brettin T."/>
            <person name="Bruce D."/>
            <person name="Tapia R."/>
            <person name="Brainard J."/>
            <person name="Schmutz J."/>
            <person name="Larimer F."/>
            <person name="Land M."/>
            <person name="Hauser L."/>
            <person name="Kyrpides N."/>
            <person name="Mikhailova N."/>
            <person name="Bennet G."/>
            <person name="Cann I."/>
            <person name="Chen J.-S."/>
            <person name="Contreras A.L."/>
            <person name="Jones D."/>
            <person name="Kashket E."/>
            <person name="Mitchell W."/>
            <person name="Stoddard S."/>
            <person name="Schwarz W."/>
            <person name="Qureshi N."/>
            <person name="Young M."/>
            <person name="Shi Z."/>
            <person name="Ezeji T."/>
            <person name="White B."/>
            <person name="Blaschek H."/>
            <person name="Richardson P."/>
        </authorList>
    </citation>
    <scope>NUCLEOTIDE SEQUENCE [LARGE SCALE GENOMIC DNA]</scope>
    <source>
        <strain>ATCC 51743 / NCIMB 8052</strain>
    </source>
</reference>
<comment type="function">
    <text evidence="1">One of the primary rRNA binding proteins. Required for association of the 30S and 50S subunits to form the 70S ribosome, for tRNA binding and peptide bond formation. It has been suggested to have peptidyltransferase activity; this is somewhat controversial. Makes several contacts with the 16S rRNA in the 70S ribosome.</text>
</comment>
<comment type="subunit">
    <text evidence="1">Part of the 50S ribosomal subunit. Forms a bridge to the 30S subunit in the 70S ribosome.</text>
</comment>
<comment type="similarity">
    <text evidence="1">Belongs to the universal ribosomal protein uL2 family.</text>
</comment>
<organism>
    <name type="scientific">Clostridium beijerinckii (strain ATCC 51743 / NCIMB 8052)</name>
    <name type="common">Clostridium acetobutylicum</name>
    <dbReference type="NCBI Taxonomy" id="290402"/>
    <lineage>
        <taxon>Bacteria</taxon>
        <taxon>Bacillati</taxon>
        <taxon>Bacillota</taxon>
        <taxon>Clostridia</taxon>
        <taxon>Eubacteriales</taxon>
        <taxon>Clostridiaceae</taxon>
        <taxon>Clostridium</taxon>
    </lineage>
</organism>
<protein>
    <recommendedName>
        <fullName evidence="1">Large ribosomal subunit protein uL2</fullName>
    </recommendedName>
    <alternativeName>
        <fullName evidence="3">50S ribosomal protein L2</fullName>
    </alternativeName>
</protein>
<name>RL2_CLOB8</name>
<sequence length="277" mass="30359">MAVKKFNPITPARRQMTMPTFEEITSQEPEKSLLVALKSKAGRNAQGKITVRHRGGGVKRKYRIIDFKRNKDEIPAKVATIEYDPNRSAYIALAIYSDGEKRYILAPAGLKVGDVIESGVNADIKPGNALPLKNIPVGTVIHNIELQRGKGGQLVRAAGGSAQLMAKEGDYATLRLPSGEMRYVRIECRATIGTLSNATNDIVNIGKAGRKRHMGWRPTVRGSVMNPNDHPHGGGEGKSPVGRPSPVTPWGKPALGYKTRKTKKYSDKFIIKDRRAK</sequence>
<gene>
    <name evidence="1" type="primary">rplB</name>
    <name type="ordered locus">Cbei_0154</name>
</gene>
<accession>A6LPR4</accession>
<feature type="chain" id="PRO_1000086325" description="Large ribosomal subunit protein uL2">
    <location>
        <begin position="1"/>
        <end position="277"/>
    </location>
</feature>
<feature type="region of interest" description="Disordered" evidence="2">
    <location>
        <begin position="222"/>
        <end position="259"/>
    </location>
</feature>
<keyword id="KW-0687">Ribonucleoprotein</keyword>
<keyword id="KW-0689">Ribosomal protein</keyword>
<keyword id="KW-0694">RNA-binding</keyword>
<keyword id="KW-0699">rRNA-binding</keyword>
<dbReference type="EMBL" id="CP000721">
    <property type="protein sequence ID" value="ABR32344.1"/>
    <property type="molecule type" value="Genomic_DNA"/>
</dbReference>
<dbReference type="RefSeq" id="WP_011967514.1">
    <property type="nucleotide sequence ID" value="NC_009617.1"/>
</dbReference>
<dbReference type="SMR" id="A6LPR4"/>
<dbReference type="KEGG" id="cbe:Cbei_0154"/>
<dbReference type="eggNOG" id="COG0090">
    <property type="taxonomic scope" value="Bacteria"/>
</dbReference>
<dbReference type="HOGENOM" id="CLU_036235_2_1_9"/>
<dbReference type="Proteomes" id="UP000000565">
    <property type="component" value="Chromosome"/>
</dbReference>
<dbReference type="GO" id="GO:0015934">
    <property type="term" value="C:large ribosomal subunit"/>
    <property type="evidence" value="ECO:0007669"/>
    <property type="project" value="InterPro"/>
</dbReference>
<dbReference type="GO" id="GO:0019843">
    <property type="term" value="F:rRNA binding"/>
    <property type="evidence" value="ECO:0007669"/>
    <property type="project" value="UniProtKB-UniRule"/>
</dbReference>
<dbReference type="GO" id="GO:0003735">
    <property type="term" value="F:structural constituent of ribosome"/>
    <property type="evidence" value="ECO:0007669"/>
    <property type="project" value="InterPro"/>
</dbReference>
<dbReference type="GO" id="GO:0016740">
    <property type="term" value="F:transferase activity"/>
    <property type="evidence" value="ECO:0007669"/>
    <property type="project" value="InterPro"/>
</dbReference>
<dbReference type="GO" id="GO:0002181">
    <property type="term" value="P:cytoplasmic translation"/>
    <property type="evidence" value="ECO:0007669"/>
    <property type="project" value="TreeGrafter"/>
</dbReference>
<dbReference type="FunFam" id="2.30.30.30:FF:000001">
    <property type="entry name" value="50S ribosomal protein L2"/>
    <property type="match status" value="1"/>
</dbReference>
<dbReference type="FunFam" id="2.40.50.140:FF:000003">
    <property type="entry name" value="50S ribosomal protein L2"/>
    <property type="match status" value="1"/>
</dbReference>
<dbReference type="FunFam" id="4.10.950.10:FF:000001">
    <property type="entry name" value="50S ribosomal protein L2"/>
    <property type="match status" value="1"/>
</dbReference>
<dbReference type="Gene3D" id="2.30.30.30">
    <property type="match status" value="1"/>
</dbReference>
<dbReference type="Gene3D" id="2.40.50.140">
    <property type="entry name" value="Nucleic acid-binding proteins"/>
    <property type="match status" value="1"/>
</dbReference>
<dbReference type="Gene3D" id="4.10.950.10">
    <property type="entry name" value="Ribosomal protein L2, domain 3"/>
    <property type="match status" value="1"/>
</dbReference>
<dbReference type="HAMAP" id="MF_01320_B">
    <property type="entry name" value="Ribosomal_uL2_B"/>
    <property type="match status" value="1"/>
</dbReference>
<dbReference type="InterPro" id="IPR012340">
    <property type="entry name" value="NA-bd_OB-fold"/>
</dbReference>
<dbReference type="InterPro" id="IPR014722">
    <property type="entry name" value="Rib_uL2_dom2"/>
</dbReference>
<dbReference type="InterPro" id="IPR002171">
    <property type="entry name" value="Ribosomal_uL2"/>
</dbReference>
<dbReference type="InterPro" id="IPR005880">
    <property type="entry name" value="Ribosomal_uL2_bac/org-type"/>
</dbReference>
<dbReference type="InterPro" id="IPR022669">
    <property type="entry name" value="Ribosomal_uL2_C"/>
</dbReference>
<dbReference type="InterPro" id="IPR022671">
    <property type="entry name" value="Ribosomal_uL2_CS"/>
</dbReference>
<dbReference type="InterPro" id="IPR014726">
    <property type="entry name" value="Ribosomal_uL2_dom3"/>
</dbReference>
<dbReference type="InterPro" id="IPR022666">
    <property type="entry name" value="Ribosomal_uL2_RNA-bd_dom"/>
</dbReference>
<dbReference type="InterPro" id="IPR008991">
    <property type="entry name" value="Translation_prot_SH3-like_sf"/>
</dbReference>
<dbReference type="NCBIfam" id="TIGR01171">
    <property type="entry name" value="rplB_bact"/>
    <property type="match status" value="1"/>
</dbReference>
<dbReference type="PANTHER" id="PTHR13691:SF5">
    <property type="entry name" value="LARGE RIBOSOMAL SUBUNIT PROTEIN UL2M"/>
    <property type="match status" value="1"/>
</dbReference>
<dbReference type="PANTHER" id="PTHR13691">
    <property type="entry name" value="RIBOSOMAL PROTEIN L2"/>
    <property type="match status" value="1"/>
</dbReference>
<dbReference type="Pfam" id="PF00181">
    <property type="entry name" value="Ribosomal_L2"/>
    <property type="match status" value="1"/>
</dbReference>
<dbReference type="Pfam" id="PF03947">
    <property type="entry name" value="Ribosomal_L2_C"/>
    <property type="match status" value="1"/>
</dbReference>
<dbReference type="PIRSF" id="PIRSF002158">
    <property type="entry name" value="Ribosomal_L2"/>
    <property type="match status" value="1"/>
</dbReference>
<dbReference type="SMART" id="SM01383">
    <property type="entry name" value="Ribosomal_L2"/>
    <property type="match status" value="1"/>
</dbReference>
<dbReference type="SMART" id="SM01382">
    <property type="entry name" value="Ribosomal_L2_C"/>
    <property type="match status" value="1"/>
</dbReference>
<dbReference type="SUPFAM" id="SSF50249">
    <property type="entry name" value="Nucleic acid-binding proteins"/>
    <property type="match status" value="1"/>
</dbReference>
<dbReference type="SUPFAM" id="SSF50104">
    <property type="entry name" value="Translation proteins SH3-like domain"/>
    <property type="match status" value="1"/>
</dbReference>
<dbReference type="PROSITE" id="PS00467">
    <property type="entry name" value="RIBOSOMAL_L2"/>
    <property type="match status" value="1"/>
</dbReference>